<reference key="1">
    <citation type="journal article" date="2004" name="Nature">
        <title>Genome evolution in yeasts.</title>
        <authorList>
            <person name="Dujon B."/>
            <person name="Sherman D."/>
            <person name="Fischer G."/>
            <person name="Durrens P."/>
            <person name="Casaregola S."/>
            <person name="Lafontaine I."/>
            <person name="de Montigny J."/>
            <person name="Marck C."/>
            <person name="Neuveglise C."/>
            <person name="Talla E."/>
            <person name="Goffard N."/>
            <person name="Frangeul L."/>
            <person name="Aigle M."/>
            <person name="Anthouard V."/>
            <person name="Babour A."/>
            <person name="Barbe V."/>
            <person name="Barnay S."/>
            <person name="Blanchin S."/>
            <person name="Beckerich J.-M."/>
            <person name="Beyne E."/>
            <person name="Bleykasten C."/>
            <person name="Boisrame A."/>
            <person name="Boyer J."/>
            <person name="Cattolico L."/>
            <person name="Confanioleri F."/>
            <person name="de Daruvar A."/>
            <person name="Despons L."/>
            <person name="Fabre E."/>
            <person name="Fairhead C."/>
            <person name="Ferry-Dumazet H."/>
            <person name="Groppi A."/>
            <person name="Hantraye F."/>
            <person name="Hennequin C."/>
            <person name="Jauniaux N."/>
            <person name="Joyet P."/>
            <person name="Kachouri R."/>
            <person name="Kerrest A."/>
            <person name="Koszul R."/>
            <person name="Lemaire M."/>
            <person name="Lesur I."/>
            <person name="Ma L."/>
            <person name="Muller H."/>
            <person name="Nicaud J.-M."/>
            <person name="Nikolski M."/>
            <person name="Oztas S."/>
            <person name="Ozier-Kalogeropoulos O."/>
            <person name="Pellenz S."/>
            <person name="Potier S."/>
            <person name="Richard G.-F."/>
            <person name="Straub M.-L."/>
            <person name="Suleau A."/>
            <person name="Swennen D."/>
            <person name="Tekaia F."/>
            <person name="Wesolowski-Louvel M."/>
            <person name="Westhof E."/>
            <person name="Wirth B."/>
            <person name="Zeniou-Meyer M."/>
            <person name="Zivanovic Y."/>
            <person name="Bolotin-Fukuhara M."/>
            <person name="Thierry A."/>
            <person name="Bouchier C."/>
            <person name="Caudron B."/>
            <person name="Scarpelli C."/>
            <person name="Gaillardin C."/>
            <person name="Weissenbach J."/>
            <person name="Wincker P."/>
            <person name="Souciet J.-L."/>
        </authorList>
    </citation>
    <scope>NUCLEOTIDE SEQUENCE [LARGE SCALE GENOMIC DNA]</scope>
    <source>
        <strain>ATCC 2001 / BCRC 20586 / JCM 3761 / NBRC 0622 / NRRL Y-65 / CBS 138</strain>
    </source>
</reference>
<proteinExistence type="inferred from homology"/>
<sequence>MVNVVLGSQWGDEGKGKLVDILVSHYDVVARCAGGNNAGHTIVVDGVKYDFHMLPSGLVNPNCKNLLGNGVVIHIPSFFKELETLESKGLNDARGRLFISSRAHLVFDFHQRTDKLRELELAGRSKDGKNIGTTGKGIGPTYSTKASRSGLRVHHLVNDNPGAWELFESRYRRLLETRKQRYGDFDYDAEEELNRFKQYKESLKPFVVDSVDFLHKSIANNEKILVEGANALMLDIDFGTYPYVTSSNTGIGGVITGLGIPPQKIQEVYGVVKAYTTRVGEGPFPTEQLNEQGEKLQSIGAEFGVTTGRKRRCGWLDLVLLKYSTLINGYTSLNITKLDVLDTFTEIPVGVSYKYKGETLNSFPEDLLTLGNVEVEYVTLPGWNQDITQIKKYDDLPENAKKYLKFIEDFVKVPVQWVGTGPARDSMLEKQI</sequence>
<dbReference type="EC" id="6.3.4.4" evidence="2"/>
<dbReference type="EMBL" id="CR380957">
    <property type="protein sequence ID" value="CAG61406.1"/>
    <property type="molecule type" value="Genomic_DNA"/>
</dbReference>
<dbReference type="RefSeq" id="XP_448445.1">
    <property type="nucleotide sequence ID" value="XM_448445.1"/>
</dbReference>
<dbReference type="SMR" id="Q6FMU9"/>
<dbReference type="FunCoup" id="Q6FMU9">
    <property type="interactions" value="858"/>
</dbReference>
<dbReference type="STRING" id="284593.Q6FMU9"/>
<dbReference type="EnsemblFungi" id="CAGL0K05027g-T">
    <property type="protein sequence ID" value="CAGL0K05027g-T-p1"/>
    <property type="gene ID" value="CAGL0K05027g"/>
</dbReference>
<dbReference type="KEGG" id="cgr:2890501"/>
<dbReference type="CGD" id="CAL0134249">
    <property type="gene designation" value="CAGL0K05027g"/>
</dbReference>
<dbReference type="VEuPathDB" id="FungiDB:B1J91_K05027g"/>
<dbReference type="VEuPathDB" id="FungiDB:CAGL0K05027g"/>
<dbReference type="eggNOG" id="KOG1355">
    <property type="taxonomic scope" value="Eukaryota"/>
</dbReference>
<dbReference type="HOGENOM" id="CLU_029848_3_2_1"/>
<dbReference type="InParanoid" id="Q6FMU9"/>
<dbReference type="OMA" id="FHHAKPI"/>
<dbReference type="UniPathway" id="UPA00075">
    <property type="reaction ID" value="UER00335"/>
</dbReference>
<dbReference type="Proteomes" id="UP000002428">
    <property type="component" value="Chromosome K"/>
</dbReference>
<dbReference type="GO" id="GO:0005737">
    <property type="term" value="C:cytoplasm"/>
    <property type="evidence" value="ECO:0007669"/>
    <property type="project" value="UniProtKB-SubCell"/>
</dbReference>
<dbReference type="GO" id="GO:0062040">
    <property type="term" value="C:fungal biofilm matrix"/>
    <property type="evidence" value="ECO:0000314"/>
    <property type="project" value="CGD"/>
</dbReference>
<dbReference type="GO" id="GO:0004019">
    <property type="term" value="F:adenylosuccinate synthase activity"/>
    <property type="evidence" value="ECO:0007669"/>
    <property type="project" value="UniProtKB-UniRule"/>
</dbReference>
<dbReference type="GO" id="GO:0003688">
    <property type="term" value="F:DNA replication origin binding"/>
    <property type="evidence" value="ECO:0007669"/>
    <property type="project" value="EnsemblFungi"/>
</dbReference>
<dbReference type="GO" id="GO:0005525">
    <property type="term" value="F:GTP binding"/>
    <property type="evidence" value="ECO:0007669"/>
    <property type="project" value="UniProtKB-UniRule"/>
</dbReference>
<dbReference type="GO" id="GO:0000287">
    <property type="term" value="F:magnesium ion binding"/>
    <property type="evidence" value="ECO:0007669"/>
    <property type="project" value="UniProtKB-UniRule"/>
</dbReference>
<dbReference type="GO" id="GO:0044208">
    <property type="term" value="P:'de novo' AMP biosynthetic process"/>
    <property type="evidence" value="ECO:0007669"/>
    <property type="project" value="UniProtKB-UniRule"/>
</dbReference>
<dbReference type="GO" id="GO:0046040">
    <property type="term" value="P:IMP metabolic process"/>
    <property type="evidence" value="ECO:0007669"/>
    <property type="project" value="TreeGrafter"/>
</dbReference>
<dbReference type="CDD" id="cd03108">
    <property type="entry name" value="AdSS"/>
    <property type="match status" value="1"/>
</dbReference>
<dbReference type="FunFam" id="3.90.170.10:FF:000001">
    <property type="entry name" value="Adenylosuccinate synthetase"/>
    <property type="match status" value="1"/>
</dbReference>
<dbReference type="FunFam" id="1.10.300.10:FF:000002">
    <property type="entry name" value="Adenylosuccinate synthetase, chloroplastic"/>
    <property type="match status" value="1"/>
</dbReference>
<dbReference type="Gene3D" id="3.40.440.10">
    <property type="entry name" value="Adenylosuccinate Synthetase, subunit A, domain 1"/>
    <property type="match status" value="1"/>
</dbReference>
<dbReference type="Gene3D" id="1.10.300.10">
    <property type="entry name" value="Adenylosuccinate Synthetase, subunit A, domain 2"/>
    <property type="match status" value="1"/>
</dbReference>
<dbReference type="Gene3D" id="3.90.170.10">
    <property type="entry name" value="Adenylosuccinate Synthetase, subunit A, domain 3"/>
    <property type="match status" value="1"/>
</dbReference>
<dbReference type="HAMAP" id="MF_00011">
    <property type="entry name" value="Adenylosucc_synth"/>
    <property type="match status" value="1"/>
</dbReference>
<dbReference type="InterPro" id="IPR018220">
    <property type="entry name" value="Adenylosuccin_syn_GTP-bd"/>
</dbReference>
<dbReference type="InterPro" id="IPR033128">
    <property type="entry name" value="Adenylosuccin_syn_Lys_AS"/>
</dbReference>
<dbReference type="InterPro" id="IPR042109">
    <property type="entry name" value="Adenylosuccinate_synth_dom1"/>
</dbReference>
<dbReference type="InterPro" id="IPR042110">
    <property type="entry name" value="Adenylosuccinate_synth_dom2"/>
</dbReference>
<dbReference type="InterPro" id="IPR042111">
    <property type="entry name" value="Adenylosuccinate_synth_dom3"/>
</dbReference>
<dbReference type="InterPro" id="IPR001114">
    <property type="entry name" value="Adenylosuccinate_synthetase"/>
</dbReference>
<dbReference type="InterPro" id="IPR027417">
    <property type="entry name" value="P-loop_NTPase"/>
</dbReference>
<dbReference type="NCBIfam" id="NF002223">
    <property type="entry name" value="PRK01117.1"/>
    <property type="match status" value="1"/>
</dbReference>
<dbReference type="NCBIfam" id="TIGR00184">
    <property type="entry name" value="purA"/>
    <property type="match status" value="1"/>
</dbReference>
<dbReference type="PANTHER" id="PTHR11846">
    <property type="entry name" value="ADENYLOSUCCINATE SYNTHETASE"/>
    <property type="match status" value="1"/>
</dbReference>
<dbReference type="PANTHER" id="PTHR11846:SF0">
    <property type="entry name" value="ADENYLOSUCCINATE SYNTHETASE"/>
    <property type="match status" value="1"/>
</dbReference>
<dbReference type="Pfam" id="PF00709">
    <property type="entry name" value="Adenylsucc_synt"/>
    <property type="match status" value="1"/>
</dbReference>
<dbReference type="SMART" id="SM00788">
    <property type="entry name" value="Adenylsucc_synt"/>
    <property type="match status" value="1"/>
</dbReference>
<dbReference type="SUPFAM" id="SSF52540">
    <property type="entry name" value="P-loop containing nucleoside triphosphate hydrolases"/>
    <property type="match status" value="1"/>
</dbReference>
<dbReference type="PROSITE" id="PS01266">
    <property type="entry name" value="ADENYLOSUCCIN_SYN_1"/>
    <property type="match status" value="1"/>
</dbReference>
<dbReference type="PROSITE" id="PS00513">
    <property type="entry name" value="ADENYLOSUCCIN_SYN_2"/>
    <property type="match status" value="1"/>
</dbReference>
<evidence type="ECO:0000250" key="1"/>
<evidence type="ECO:0000255" key="2">
    <source>
        <dbReference type="HAMAP-Rule" id="MF_03125"/>
    </source>
</evidence>
<organism>
    <name type="scientific">Candida glabrata (strain ATCC 2001 / BCRC 20586 / JCM 3761 / NBRC 0622 / NRRL Y-65 / CBS 138)</name>
    <name type="common">Yeast</name>
    <name type="synonym">Nakaseomyces glabratus</name>
    <dbReference type="NCBI Taxonomy" id="284593"/>
    <lineage>
        <taxon>Eukaryota</taxon>
        <taxon>Fungi</taxon>
        <taxon>Dikarya</taxon>
        <taxon>Ascomycota</taxon>
        <taxon>Saccharomycotina</taxon>
        <taxon>Saccharomycetes</taxon>
        <taxon>Saccharomycetales</taxon>
        <taxon>Saccharomycetaceae</taxon>
        <taxon>Nakaseomyces</taxon>
    </lineage>
</organism>
<comment type="function">
    <text evidence="1">Plays an important role in the de novo pathway and in the salvage pathway of purine nucleotide biosynthesis. Catalyzes the first committed step in the biosynthesis of AMP from IMP (By similarity).</text>
</comment>
<comment type="catalytic activity">
    <reaction evidence="2">
        <text>IMP + L-aspartate + GTP = N(6)-(1,2-dicarboxyethyl)-AMP + GDP + phosphate + 2 H(+)</text>
        <dbReference type="Rhea" id="RHEA:15753"/>
        <dbReference type="ChEBI" id="CHEBI:15378"/>
        <dbReference type="ChEBI" id="CHEBI:29991"/>
        <dbReference type="ChEBI" id="CHEBI:37565"/>
        <dbReference type="ChEBI" id="CHEBI:43474"/>
        <dbReference type="ChEBI" id="CHEBI:57567"/>
        <dbReference type="ChEBI" id="CHEBI:58053"/>
        <dbReference type="ChEBI" id="CHEBI:58189"/>
        <dbReference type="EC" id="6.3.4.4"/>
    </reaction>
</comment>
<comment type="cofactor">
    <cofactor evidence="2">
        <name>Mg(2+)</name>
        <dbReference type="ChEBI" id="CHEBI:18420"/>
    </cofactor>
    <text evidence="2">Binds 1 Mg(2+) ion per subunit.</text>
</comment>
<comment type="pathway">
    <text evidence="2">Purine metabolism; AMP biosynthesis via de novo pathway; AMP from IMP: step 1/2.</text>
</comment>
<comment type="subunit">
    <text evidence="2">Homodimer.</text>
</comment>
<comment type="subcellular location">
    <subcellularLocation>
        <location evidence="2">Cytoplasm</location>
    </subcellularLocation>
</comment>
<comment type="similarity">
    <text evidence="2">Belongs to the adenylosuccinate synthetase family.</text>
</comment>
<keyword id="KW-0963">Cytoplasm</keyword>
<keyword id="KW-0342">GTP-binding</keyword>
<keyword id="KW-0436">Ligase</keyword>
<keyword id="KW-0460">Magnesium</keyword>
<keyword id="KW-0479">Metal-binding</keyword>
<keyword id="KW-0547">Nucleotide-binding</keyword>
<keyword id="KW-0658">Purine biosynthesis</keyword>
<keyword id="KW-1185">Reference proteome</keyword>
<gene>
    <name type="ordered locus">CAGL0K05027g</name>
</gene>
<protein>
    <recommendedName>
        <fullName evidence="2">Adenylosuccinate synthetase</fullName>
        <shortName evidence="2">AMPSase</shortName>
        <shortName evidence="2">AdSS</shortName>
        <ecNumber evidence="2">6.3.4.4</ecNumber>
    </recommendedName>
    <alternativeName>
        <fullName evidence="2">IMP--aspartate ligase</fullName>
    </alternativeName>
</protein>
<feature type="chain" id="PRO_0000399329" description="Adenylosuccinate synthetase">
    <location>
        <begin position="1"/>
        <end position="432"/>
    </location>
</feature>
<feature type="active site" description="Proton acceptor" evidence="2">
    <location>
        <position position="12"/>
    </location>
</feature>
<feature type="active site" description="Proton donor" evidence="2">
    <location>
        <position position="40"/>
    </location>
</feature>
<feature type="binding site" evidence="2">
    <location>
        <begin position="11"/>
        <end position="17"/>
    </location>
    <ligand>
        <name>GTP</name>
        <dbReference type="ChEBI" id="CHEBI:37565"/>
    </ligand>
</feature>
<feature type="binding site" description="in other chain" evidence="2">
    <location>
        <begin position="12"/>
        <end position="15"/>
    </location>
    <ligand>
        <name>IMP</name>
        <dbReference type="ChEBI" id="CHEBI:58053"/>
        <note>ligand shared between dimeric partners</note>
    </ligand>
</feature>
<feature type="binding site" evidence="2">
    <location>
        <position position="12"/>
    </location>
    <ligand>
        <name>Mg(2+)</name>
        <dbReference type="ChEBI" id="CHEBI:18420"/>
    </ligand>
</feature>
<feature type="binding site" description="in other chain" evidence="2">
    <location>
        <begin position="37"/>
        <end position="40"/>
    </location>
    <ligand>
        <name>IMP</name>
        <dbReference type="ChEBI" id="CHEBI:58053"/>
        <note>ligand shared between dimeric partners</note>
    </ligand>
</feature>
<feature type="binding site" evidence="2">
    <location>
        <begin position="39"/>
        <end position="41"/>
    </location>
    <ligand>
        <name>GTP</name>
        <dbReference type="ChEBI" id="CHEBI:37565"/>
    </ligand>
</feature>
<feature type="binding site" evidence="2">
    <location>
        <position position="39"/>
    </location>
    <ligand>
        <name>Mg(2+)</name>
        <dbReference type="ChEBI" id="CHEBI:18420"/>
    </ligand>
</feature>
<feature type="binding site" description="in other chain" evidence="2">
    <location>
        <position position="134"/>
    </location>
    <ligand>
        <name>IMP</name>
        <dbReference type="ChEBI" id="CHEBI:58053"/>
        <note>ligand shared between dimeric partners</note>
    </ligand>
</feature>
<feature type="binding site" evidence="2">
    <location>
        <position position="148"/>
    </location>
    <ligand>
        <name>IMP</name>
        <dbReference type="ChEBI" id="CHEBI:58053"/>
        <note>ligand shared between dimeric partners</note>
    </ligand>
</feature>
<feature type="binding site" description="in other chain" evidence="2">
    <location>
        <position position="230"/>
    </location>
    <ligand>
        <name>IMP</name>
        <dbReference type="ChEBI" id="CHEBI:58053"/>
        <note>ligand shared between dimeric partners</note>
    </ligand>
</feature>
<feature type="binding site" description="in other chain" evidence="2">
    <location>
        <position position="245"/>
    </location>
    <ligand>
        <name>IMP</name>
        <dbReference type="ChEBI" id="CHEBI:58053"/>
        <note>ligand shared between dimeric partners</note>
    </ligand>
</feature>
<feature type="binding site" evidence="2">
    <location>
        <begin position="305"/>
        <end position="311"/>
    </location>
    <ligand>
        <name>substrate</name>
    </ligand>
</feature>
<feature type="binding site" description="in other chain" evidence="2">
    <location>
        <position position="309"/>
    </location>
    <ligand>
        <name>IMP</name>
        <dbReference type="ChEBI" id="CHEBI:58053"/>
        <note>ligand shared between dimeric partners</note>
    </ligand>
</feature>
<feature type="binding site" evidence="2">
    <location>
        <position position="311"/>
    </location>
    <ligand>
        <name>GTP</name>
        <dbReference type="ChEBI" id="CHEBI:37565"/>
    </ligand>
</feature>
<feature type="binding site" evidence="2">
    <location>
        <begin position="337"/>
        <end position="339"/>
    </location>
    <ligand>
        <name>GTP</name>
        <dbReference type="ChEBI" id="CHEBI:37565"/>
    </ligand>
</feature>
<feature type="binding site" evidence="2">
    <location>
        <begin position="419"/>
        <end position="421"/>
    </location>
    <ligand>
        <name>GTP</name>
        <dbReference type="ChEBI" id="CHEBI:37565"/>
    </ligand>
</feature>
<accession>Q6FMU9</accession>
<name>PURA_CANGA</name>